<feature type="chain" id="PRO_0000075133" description="Alanine--tRNA ligase">
    <location>
        <begin position="1"/>
        <end position="860"/>
    </location>
</feature>
<feature type="binding site" evidence="1">
    <location>
        <position position="553"/>
    </location>
    <ligand>
        <name>Zn(2+)</name>
        <dbReference type="ChEBI" id="CHEBI:29105"/>
    </ligand>
</feature>
<feature type="binding site" evidence="1">
    <location>
        <position position="557"/>
    </location>
    <ligand>
        <name>Zn(2+)</name>
        <dbReference type="ChEBI" id="CHEBI:29105"/>
    </ligand>
</feature>
<feature type="binding site" evidence="1">
    <location>
        <position position="655"/>
    </location>
    <ligand>
        <name>Zn(2+)</name>
        <dbReference type="ChEBI" id="CHEBI:29105"/>
    </ligand>
</feature>
<feature type="binding site" evidence="1">
    <location>
        <position position="659"/>
    </location>
    <ligand>
        <name>Zn(2+)</name>
        <dbReference type="ChEBI" id="CHEBI:29105"/>
    </ligand>
</feature>
<keyword id="KW-0030">Aminoacyl-tRNA synthetase</keyword>
<keyword id="KW-0067">ATP-binding</keyword>
<keyword id="KW-0963">Cytoplasm</keyword>
<keyword id="KW-0436">Ligase</keyword>
<keyword id="KW-0479">Metal-binding</keyword>
<keyword id="KW-0547">Nucleotide-binding</keyword>
<keyword id="KW-0648">Protein biosynthesis</keyword>
<keyword id="KW-0694">RNA-binding</keyword>
<keyword id="KW-0820">tRNA-binding</keyword>
<keyword id="KW-0862">Zinc</keyword>
<evidence type="ECO:0000255" key="1">
    <source>
        <dbReference type="HAMAP-Rule" id="MF_00036"/>
    </source>
</evidence>
<protein>
    <recommendedName>
        <fullName evidence="1">Alanine--tRNA ligase</fullName>
        <ecNumber evidence="1">6.1.1.7</ecNumber>
    </recommendedName>
    <alternativeName>
        <fullName evidence="1">Alanyl-tRNA synthetase</fullName>
        <shortName evidence="1">AlaRS</shortName>
    </alternativeName>
</protein>
<gene>
    <name evidence="1" type="primary">alaS</name>
    <name type="ordered locus">lpp1763</name>
</gene>
<comment type="function">
    <text evidence="1">Catalyzes the attachment of alanine to tRNA(Ala) in a two-step reaction: alanine is first activated by ATP to form Ala-AMP and then transferred to the acceptor end of tRNA(Ala). Also edits incorrectly charged Ser-tRNA(Ala) and Gly-tRNA(Ala) via its editing domain.</text>
</comment>
<comment type="catalytic activity">
    <reaction evidence="1">
        <text>tRNA(Ala) + L-alanine + ATP = L-alanyl-tRNA(Ala) + AMP + diphosphate</text>
        <dbReference type="Rhea" id="RHEA:12540"/>
        <dbReference type="Rhea" id="RHEA-COMP:9657"/>
        <dbReference type="Rhea" id="RHEA-COMP:9923"/>
        <dbReference type="ChEBI" id="CHEBI:30616"/>
        <dbReference type="ChEBI" id="CHEBI:33019"/>
        <dbReference type="ChEBI" id="CHEBI:57972"/>
        <dbReference type="ChEBI" id="CHEBI:78442"/>
        <dbReference type="ChEBI" id="CHEBI:78497"/>
        <dbReference type="ChEBI" id="CHEBI:456215"/>
        <dbReference type="EC" id="6.1.1.7"/>
    </reaction>
</comment>
<comment type="cofactor">
    <cofactor evidence="1">
        <name>Zn(2+)</name>
        <dbReference type="ChEBI" id="CHEBI:29105"/>
    </cofactor>
    <text evidence="1">Binds 1 zinc ion per subunit.</text>
</comment>
<comment type="subcellular location">
    <subcellularLocation>
        <location evidence="1">Cytoplasm</location>
    </subcellularLocation>
</comment>
<comment type="domain">
    <text evidence="1">Consists of three domains; the N-terminal catalytic domain, the editing domain and the C-terminal C-Ala domain. The editing domain removes incorrectly charged amino acids, while the C-Ala domain, along with tRNA(Ala), serves as a bridge to cooperatively bring together the editing and aminoacylation centers thus stimulating deacylation of misacylated tRNAs.</text>
</comment>
<comment type="similarity">
    <text evidence="1">Belongs to the class-II aminoacyl-tRNA synthetase family.</text>
</comment>
<dbReference type="EC" id="6.1.1.7" evidence="1"/>
<dbReference type="EMBL" id="CR628336">
    <property type="protein sequence ID" value="CAH12915.1"/>
    <property type="molecule type" value="Genomic_DNA"/>
</dbReference>
<dbReference type="RefSeq" id="WP_011214060.1">
    <property type="nucleotide sequence ID" value="NC_006368.1"/>
</dbReference>
<dbReference type="SMR" id="Q5X4B7"/>
<dbReference type="KEGG" id="lpp:lpp1763"/>
<dbReference type="LegioList" id="lpp1763"/>
<dbReference type="HOGENOM" id="CLU_004485_1_1_6"/>
<dbReference type="GO" id="GO:0005829">
    <property type="term" value="C:cytosol"/>
    <property type="evidence" value="ECO:0007669"/>
    <property type="project" value="TreeGrafter"/>
</dbReference>
<dbReference type="GO" id="GO:0004813">
    <property type="term" value="F:alanine-tRNA ligase activity"/>
    <property type="evidence" value="ECO:0007669"/>
    <property type="project" value="UniProtKB-UniRule"/>
</dbReference>
<dbReference type="GO" id="GO:0002161">
    <property type="term" value="F:aminoacyl-tRNA deacylase activity"/>
    <property type="evidence" value="ECO:0007669"/>
    <property type="project" value="TreeGrafter"/>
</dbReference>
<dbReference type="GO" id="GO:0005524">
    <property type="term" value="F:ATP binding"/>
    <property type="evidence" value="ECO:0007669"/>
    <property type="project" value="UniProtKB-UniRule"/>
</dbReference>
<dbReference type="GO" id="GO:0000049">
    <property type="term" value="F:tRNA binding"/>
    <property type="evidence" value="ECO:0007669"/>
    <property type="project" value="UniProtKB-KW"/>
</dbReference>
<dbReference type="GO" id="GO:0008270">
    <property type="term" value="F:zinc ion binding"/>
    <property type="evidence" value="ECO:0007669"/>
    <property type="project" value="UniProtKB-UniRule"/>
</dbReference>
<dbReference type="GO" id="GO:0006419">
    <property type="term" value="P:alanyl-tRNA aminoacylation"/>
    <property type="evidence" value="ECO:0007669"/>
    <property type="project" value="UniProtKB-UniRule"/>
</dbReference>
<dbReference type="GO" id="GO:0045892">
    <property type="term" value="P:negative regulation of DNA-templated transcription"/>
    <property type="evidence" value="ECO:0007669"/>
    <property type="project" value="TreeGrafter"/>
</dbReference>
<dbReference type="CDD" id="cd00673">
    <property type="entry name" value="AlaRS_core"/>
    <property type="match status" value="1"/>
</dbReference>
<dbReference type="FunFam" id="2.40.30.130:FF:000001">
    <property type="entry name" value="Alanine--tRNA ligase"/>
    <property type="match status" value="1"/>
</dbReference>
<dbReference type="FunFam" id="3.10.310.40:FF:000001">
    <property type="entry name" value="Alanine--tRNA ligase"/>
    <property type="match status" value="1"/>
</dbReference>
<dbReference type="FunFam" id="3.30.54.20:FF:000001">
    <property type="entry name" value="Alanine--tRNA ligase"/>
    <property type="match status" value="1"/>
</dbReference>
<dbReference type="FunFam" id="3.30.930.10:FF:000004">
    <property type="entry name" value="Alanine--tRNA ligase"/>
    <property type="match status" value="1"/>
</dbReference>
<dbReference type="FunFam" id="3.30.980.10:FF:000004">
    <property type="entry name" value="Alanine--tRNA ligase, cytoplasmic"/>
    <property type="match status" value="1"/>
</dbReference>
<dbReference type="Gene3D" id="2.40.30.130">
    <property type="match status" value="1"/>
</dbReference>
<dbReference type="Gene3D" id="3.10.310.40">
    <property type="match status" value="1"/>
</dbReference>
<dbReference type="Gene3D" id="3.30.54.20">
    <property type="match status" value="1"/>
</dbReference>
<dbReference type="Gene3D" id="6.10.250.550">
    <property type="match status" value="1"/>
</dbReference>
<dbReference type="Gene3D" id="3.30.930.10">
    <property type="entry name" value="Bira Bifunctional Protein, Domain 2"/>
    <property type="match status" value="1"/>
</dbReference>
<dbReference type="Gene3D" id="3.30.980.10">
    <property type="entry name" value="Threonyl-trna Synthetase, Chain A, domain 2"/>
    <property type="match status" value="1"/>
</dbReference>
<dbReference type="HAMAP" id="MF_00036_B">
    <property type="entry name" value="Ala_tRNA_synth_B"/>
    <property type="match status" value="1"/>
</dbReference>
<dbReference type="InterPro" id="IPR045864">
    <property type="entry name" value="aa-tRNA-synth_II/BPL/LPL"/>
</dbReference>
<dbReference type="InterPro" id="IPR002318">
    <property type="entry name" value="Ala-tRNA-lgiase_IIc"/>
</dbReference>
<dbReference type="InterPro" id="IPR018162">
    <property type="entry name" value="Ala-tRNA-ligase_IIc_anticod-bd"/>
</dbReference>
<dbReference type="InterPro" id="IPR018165">
    <property type="entry name" value="Ala-tRNA-synth_IIc_core"/>
</dbReference>
<dbReference type="InterPro" id="IPR018164">
    <property type="entry name" value="Ala-tRNA-synth_IIc_N"/>
</dbReference>
<dbReference type="InterPro" id="IPR050058">
    <property type="entry name" value="Ala-tRNA_ligase"/>
</dbReference>
<dbReference type="InterPro" id="IPR023033">
    <property type="entry name" value="Ala_tRNA_ligase_euk/bac"/>
</dbReference>
<dbReference type="InterPro" id="IPR003156">
    <property type="entry name" value="DHHA1_dom"/>
</dbReference>
<dbReference type="InterPro" id="IPR018163">
    <property type="entry name" value="Thr/Ala-tRNA-synth_IIc_edit"/>
</dbReference>
<dbReference type="InterPro" id="IPR009000">
    <property type="entry name" value="Transl_B-barrel_sf"/>
</dbReference>
<dbReference type="InterPro" id="IPR012947">
    <property type="entry name" value="tRNA_SAD"/>
</dbReference>
<dbReference type="NCBIfam" id="TIGR00344">
    <property type="entry name" value="alaS"/>
    <property type="match status" value="1"/>
</dbReference>
<dbReference type="PANTHER" id="PTHR11777:SF9">
    <property type="entry name" value="ALANINE--TRNA LIGASE, CYTOPLASMIC"/>
    <property type="match status" value="1"/>
</dbReference>
<dbReference type="PANTHER" id="PTHR11777">
    <property type="entry name" value="ALANYL-TRNA SYNTHETASE"/>
    <property type="match status" value="1"/>
</dbReference>
<dbReference type="Pfam" id="PF02272">
    <property type="entry name" value="DHHA1"/>
    <property type="match status" value="1"/>
</dbReference>
<dbReference type="Pfam" id="PF01411">
    <property type="entry name" value="tRNA-synt_2c"/>
    <property type="match status" value="1"/>
</dbReference>
<dbReference type="Pfam" id="PF07973">
    <property type="entry name" value="tRNA_SAD"/>
    <property type="match status" value="1"/>
</dbReference>
<dbReference type="PRINTS" id="PR00980">
    <property type="entry name" value="TRNASYNTHALA"/>
</dbReference>
<dbReference type="SMART" id="SM00863">
    <property type="entry name" value="tRNA_SAD"/>
    <property type="match status" value="1"/>
</dbReference>
<dbReference type="SUPFAM" id="SSF55681">
    <property type="entry name" value="Class II aaRS and biotin synthetases"/>
    <property type="match status" value="1"/>
</dbReference>
<dbReference type="SUPFAM" id="SSF101353">
    <property type="entry name" value="Putative anticodon-binding domain of alanyl-tRNA synthetase (AlaRS)"/>
    <property type="match status" value="1"/>
</dbReference>
<dbReference type="SUPFAM" id="SSF55186">
    <property type="entry name" value="ThrRS/AlaRS common domain"/>
    <property type="match status" value="1"/>
</dbReference>
<dbReference type="SUPFAM" id="SSF50447">
    <property type="entry name" value="Translation proteins"/>
    <property type="match status" value="1"/>
</dbReference>
<dbReference type="PROSITE" id="PS50860">
    <property type="entry name" value="AA_TRNA_LIGASE_II_ALA"/>
    <property type="match status" value="1"/>
</dbReference>
<sequence>MKSSEIRQAFLNYFVQRGHQIVASSSLVPSNDPTLLFTNAGMVQFKDLFLGLETRSYQRAATAQRCVRAGGKHNDLENVGYTARHHTFFEMLGNFSFGDYFKREAIQYAWEFLTEVLHIPAERLWVTVYKEDLEAEDIWLKEMKVSPERFSRCGEKDNFWSMGDTGPCGPCTEIFYDHGPEVAGGPPGSPDEDGDRYIEIWNLVFMQFNRDREGHLHLLPKPSVDTGMGLERLAAVIQGVHSNYEIDSFQYLIKAIAQLGQNIDLNHTSLKVIADHIRSCSFLIVDGVLPSNEGRGYVLRRIIRRAVRHGNKLGLPSPFFFKLVQPLIDVMGDAYPELINSKAHIERILQQEENQFTRTLEQGLRLLQDHIKNLKGQELSGEVAFKLYDTYGFPIDLTADIIREQGLHIDMEAFNQLMQQQREQSQAASQFTTDYHAVSQLDHQSEFHGYEKESMEAKIIGLLQEGNEVKSINKGAKGAVILDHTPFYAESGGQVGDKGLLIGKNCSFQVDDTQKVGQAVVHYGEVIKGELTLDLSIHAQVDHIRRDAIRLNHTATHLLHAALKKIVGQHVQQRGSLVDAERARFDFSHFEALNPQQIQQIEEVVNAQIRANNEVITQVMDIESAKQSGAVALFGEKYSDAVRVLSMGDFSKELCGGTHARRTGDIGLFKIVAEYGIASGIRRIEMVTGRYALAWVNEQLGFMNNLAATLKTTPNSLQEKISQLLLDNKNQEKMIAKLLSEKAQKSGADILGEIEEIKGINLLIKQLEGMDSQTMRHTMDQLKSRIDSAVIILFTIEQNKMNVIAGVSKNIIGKTPSAAQLVRHLCGKGGGRDDMAQGGGNVPEDLNSKIKEIREMIEKI</sequence>
<name>SYA_LEGPA</name>
<accession>Q5X4B7</accession>
<organism>
    <name type="scientific">Legionella pneumophila (strain Paris)</name>
    <dbReference type="NCBI Taxonomy" id="297246"/>
    <lineage>
        <taxon>Bacteria</taxon>
        <taxon>Pseudomonadati</taxon>
        <taxon>Pseudomonadota</taxon>
        <taxon>Gammaproteobacteria</taxon>
        <taxon>Legionellales</taxon>
        <taxon>Legionellaceae</taxon>
        <taxon>Legionella</taxon>
    </lineage>
</organism>
<reference key="1">
    <citation type="journal article" date="2004" name="Nat. Genet.">
        <title>Evidence in the Legionella pneumophila genome for exploitation of host cell functions and high genome plasticity.</title>
        <authorList>
            <person name="Cazalet C."/>
            <person name="Rusniok C."/>
            <person name="Brueggemann H."/>
            <person name="Zidane N."/>
            <person name="Magnier A."/>
            <person name="Ma L."/>
            <person name="Tichit M."/>
            <person name="Jarraud S."/>
            <person name="Bouchier C."/>
            <person name="Vandenesch F."/>
            <person name="Kunst F."/>
            <person name="Etienne J."/>
            <person name="Glaser P."/>
            <person name="Buchrieser C."/>
        </authorList>
    </citation>
    <scope>NUCLEOTIDE SEQUENCE [LARGE SCALE GENOMIC DNA]</scope>
    <source>
        <strain>Paris</strain>
    </source>
</reference>
<proteinExistence type="inferred from homology"/>